<accession>Q4PJX1</accession>
<accession>Q3U8Y3</accession>
<accession>Q99J66</accession>
<organism>
    <name type="scientific">Mus musculus</name>
    <name type="common">Mouse</name>
    <dbReference type="NCBI Taxonomy" id="10090"/>
    <lineage>
        <taxon>Eukaryota</taxon>
        <taxon>Metazoa</taxon>
        <taxon>Chordata</taxon>
        <taxon>Craniata</taxon>
        <taxon>Vertebrata</taxon>
        <taxon>Euteleostomi</taxon>
        <taxon>Mammalia</taxon>
        <taxon>Eutheria</taxon>
        <taxon>Euarchontoglires</taxon>
        <taxon>Glires</taxon>
        <taxon>Rodentia</taxon>
        <taxon>Myomorpha</taxon>
        <taxon>Muroidea</taxon>
        <taxon>Muridae</taxon>
        <taxon>Murinae</taxon>
        <taxon>Mus</taxon>
        <taxon>Mus</taxon>
    </lineage>
</organism>
<evidence type="ECO:0000250" key="1">
    <source>
        <dbReference type="UniProtKB" id="Q8I7F8"/>
    </source>
</evidence>
<evidence type="ECO:0000255" key="2"/>
<evidence type="ECO:0000269" key="3">
    <source>
    </source>
</evidence>
<evidence type="ECO:0000303" key="4">
    <source>
    </source>
</evidence>
<evidence type="ECO:0000303" key="5">
    <source>
    </source>
</evidence>
<evidence type="ECO:0000305" key="6"/>
<reference key="1">
    <citation type="submission" date="2006-12" db="EMBL/GenBank/DDBJ databases">
        <title>A C. elegans odr-4 homolog expressed in mouse olfactory sensory neurons.</title>
        <authorList>
            <person name="Pei X."/>
            <person name="Firestein S."/>
        </authorList>
    </citation>
    <scope>NUCLEOTIDE SEQUENCE [MRNA] (ISOFORM 1)</scope>
    <source>
        <strain>129/SvJ</strain>
        <tissue>Olfactory epithelium</tissue>
    </source>
</reference>
<reference key="2">
    <citation type="journal article" date="2004" name="Genome Res.">
        <title>The status, quality, and expansion of the NIH full-length cDNA project: the Mammalian Gene Collection (MGC).</title>
        <authorList>
            <consortium name="The MGC Project Team"/>
        </authorList>
    </citation>
    <scope>NUCLEOTIDE SEQUENCE [LARGE SCALE MRNA] (ISOFORM 2)</scope>
    <source>
        <strain>NMRI</strain>
        <tissue>Mammary tumor</tissue>
    </source>
</reference>
<reference key="3">
    <citation type="journal article" date="2005" name="Science">
        <title>The transcriptional landscape of the mammalian genome.</title>
        <authorList>
            <person name="Carninci P."/>
            <person name="Kasukawa T."/>
            <person name="Katayama S."/>
            <person name="Gough J."/>
            <person name="Frith M.C."/>
            <person name="Maeda N."/>
            <person name="Oyama R."/>
            <person name="Ravasi T."/>
            <person name="Lenhard B."/>
            <person name="Wells C."/>
            <person name="Kodzius R."/>
            <person name="Shimokawa K."/>
            <person name="Bajic V.B."/>
            <person name="Brenner S.E."/>
            <person name="Batalov S."/>
            <person name="Forrest A.R."/>
            <person name="Zavolan M."/>
            <person name="Davis M.J."/>
            <person name="Wilming L.G."/>
            <person name="Aidinis V."/>
            <person name="Allen J.E."/>
            <person name="Ambesi-Impiombato A."/>
            <person name="Apweiler R."/>
            <person name="Aturaliya R.N."/>
            <person name="Bailey T.L."/>
            <person name="Bansal M."/>
            <person name="Baxter L."/>
            <person name="Beisel K.W."/>
            <person name="Bersano T."/>
            <person name="Bono H."/>
            <person name="Chalk A.M."/>
            <person name="Chiu K.P."/>
            <person name="Choudhary V."/>
            <person name="Christoffels A."/>
            <person name="Clutterbuck D.R."/>
            <person name="Crowe M.L."/>
            <person name="Dalla E."/>
            <person name="Dalrymple B.P."/>
            <person name="de Bono B."/>
            <person name="Della Gatta G."/>
            <person name="di Bernardo D."/>
            <person name="Down T."/>
            <person name="Engstrom P."/>
            <person name="Fagiolini M."/>
            <person name="Faulkner G."/>
            <person name="Fletcher C.F."/>
            <person name="Fukushima T."/>
            <person name="Furuno M."/>
            <person name="Futaki S."/>
            <person name="Gariboldi M."/>
            <person name="Georgii-Hemming P."/>
            <person name="Gingeras T.R."/>
            <person name="Gojobori T."/>
            <person name="Green R.E."/>
            <person name="Gustincich S."/>
            <person name="Harbers M."/>
            <person name="Hayashi Y."/>
            <person name="Hensch T.K."/>
            <person name="Hirokawa N."/>
            <person name="Hill D."/>
            <person name="Huminiecki L."/>
            <person name="Iacono M."/>
            <person name="Ikeo K."/>
            <person name="Iwama A."/>
            <person name="Ishikawa T."/>
            <person name="Jakt M."/>
            <person name="Kanapin A."/>
            <person name="Katoh M."/>
            <person name="Kawasawa Y."/>
            <person name="Kelso J."/>
            <person name="Kitamura H."/>
            <person name="Kitano H."/>
            <person name="Kollias G."/>
            <person name="Krishnan S.P."/>
            <person name="Kruger A."/>
            <person name="Kummerfeld S.K."/>
            <person name="Kurochkin I.V."/>
            <person name="Lareau L.F."/>
            <person name="Lazarevic D."/>
            <person name="Lipovich L."/>
            <person name="Liu J."/>
            <person name="Liuni S."/>
            <person name="McWilliam S."/>
            <person name="Madan Babu M."/>
            <person name="Madera M."/>
            <person name="Marchionni L."/>
            <person name="Matsuda H."/>
            <person name="Matsuzawa S."/>
            <person name="Miki H."/>
            <person name="Mignone F."/>
            <person name="Miyake S."/>
            <person name="Morris K."/>
            <person name="Mottagui-Tabar S."/>
            <person name="Mulder N."/>
            <person name="Nakano N."/>
            <person name="Nakauchi H."/>
            <person name="Ng P."/>
            <person name="Nilsson R."/>
            <person name="Nishiguchi S."/>
            <person name="Nishikawa S."/>
            <person name="Nori F."/>
            <person name="Ohara O."/>
            <person name="Okazaki Y."/>
            <person name="Orlando V."/>
            <person name="Pang K.C."/>
            <person name="Pavan W.J."/>
            <person name="Pavesi G."/>
            <person name="Pesole G."/>
            <person name="Petrovsky N."/>
            <person name="Piazza S."/>
            <person name="Reed J."/>
            <person name="Reid J.F."/>
            <person name="Ring B.Z."/>
            <person name="Ringwald M."/>
            <person name="Rost B."/>
            <person name="Ruan Y."/>
            <person name="Salzberg S.L."/>
            <person name="Sandelin A."/>
            <person name="Schneider C."/>
            <person name="Schoenbach C."/>
            <person name="Sekiguchi K."/>
            <person name="Semple C.A."/>
            <person name="Seno S."/>
            <person name="Sessa L."/>
            <person name="Sheng Y."/>
            <person name="Shibata Y."/>
            <person name="Shimada H."/>
            <person name="Shimada K."/>
            <person name="Silva D."/>
            <person name="Sinclair B."/>
            <person name="Sperling S."/>
            <person name="Stupka E."/>
            <person name="Sugiura K."/>
            <person name="Sultana R."/>
            <person name="Takenaka Y."/>
            <person name="Taki K."/>
            <person name="Tammoja K."/>
            <person name="Tan S.L."/>
            <person name="Tang S."/>
            <person name="Taylor M.S."/>
            <person name="Tegner J."/>
            <person name="Teichmann S.A."/>
            <person name="Ueda H.R."/>
            <person name="van Nimwegen E."/>
            <person name="Verardo R."/>
            <person name="Wei C.L."/>
            <person name="Yagi K."/>
            <person name="Yamanishi H."/>
            <person name="Zabarovsky E."/>
            <person name="Zhu S."/>
            <person name="Zimmer A."/>
            <person name="Hide W."/>
            <person name="Bult C."/>
            <person name="Grimmond S.M."/>
            <person name="Teasdale R.D."/>
            <person name="Liu E.T."/>
            <person name="Brusic V."/>
            <person name="Quackenbush J."/>
            <person name="Wahlestedt C."/>
            <person name="Mattick J.S."/>
            <person name="Hume D.A."/>
            <person name="Kai C."/>
            <person name="Sasaki D."/>
            <person name="Tomaru Y."/>
            <person name="Fukuda S."/>
            <person name="Kanamori-Katayama M."/>
            <person name="Suzuki M."/>
            <person name="Aoki J."/>
            <person name="Arakawa T."/>
            <person name="Iida J."/>
            <person name="Imamura K."/>
            <person name="Itoh M."/>
            <person name="Kato T."/>
            <person name="Kawaji H."/>
            <person name="Kawagashira N."/>
            <person name="Kawashima T."/>
            <person name="Kojima M."/>
            <person name="Kondo S."/>
            <person name="Konno H."/>
            <person name="Nakano K."/>
            <person name="Ninomiya N."/>
            <person name="Nishio T."/>
            <person name="Okada M."/>
            <person name="Plessy C."/>
            <person name="Shibata K."/>
            <person name="Shiraki T."/>
            <person name="Suzuki S."/>
            <person name="Tagami M."/>
            <person name="Waki K."/>
            <person name="Watahiki A."/>
            <person name="Okamura-Oho Y."/>
            <person name="Suzuki H."/>
            <person name="Kawai J."/>
            <person name="Hayashizaki Y."/>
        </authorList>
    </citation>
    <scope>NUCLEOTIDE SEQUENCE [LARGE SCALE MRNA] OF 34-447 (ISOFORM 3)</scope>
    <source>
        <strain>C57BL/6J</strain>
        <tissue>Bone marrow</tissue>
    </source>
</reference>
<reference key="4">
    <citation type="journal article" date="2005" name="Genomics">
        <title>Ubiquitously expressed GPCR membrane-trafficking orthologs.</title>
        <authorList>
            <person name="Lehman C.W."/>
            <person name="Lee J.D.R."/>
            <person name="Komives C.F."/>
        </authorList>
    </citation>
    <scope>TISSUE SPECIFICITY</scope>
</reference>
<reference key="5">
    <citation type="journal article" date="2010" name="Cell">
        <title>A tissue-specific atlas of mouse protein phosphorylation and expression.</title>
        <authorList>
            <person name="Huttlin E.L."/>
            <person name="Jedrychowski M.P."/>
            <person name="Elias J.E."/>
            <person name="Goswami T."/>
            <person name="Rad R."/>
            <person name="Beausoleil S.A."/>
            <person name="Villen J."/>
            <person name="Haas W."/>
            <person name="Sowa M.E."/>
            <person name="Gygi S.P."/>
        </authorList>
    </citation>
    <scope>IDENTIFICATION BY MASS SPECTROMETRY [LARGE SCALE ANALYSIS]</scope>
    <source>
        <tissue>Brain</tissue>
        <tissue>Liver</tissue>
        <tissue>Pancreas</tissue>
        <tissue>Spleen</tissue>
    </source>
</reference>
<protein>
    <recommendedName>
        <fullName>Protein odr-4 homolog</fullName>
        <shortName>mODR-4</shortName>
    </recommendedName>
</protein>
<sequence>MGRTYIVEETVGQYLSSINLQGKPFVSGLLIGQCSSQKDYVILATRTPPKEEQNDKVKQPRAKLDNLDEEWATEHASQVSRMLPGGLVVLGIFIITTLELADDFQNALRRLIFSMEKSMSRKRLWDVTEDEVSERVTLHICSSTKKISCRTYDVQDPKSSARPADWKYQSRVSASWLSLDCTVHVNIHIPLSATSVSYTLEKNTKSGLTRWAKQIENGVYLINGQVKGNDCDLLEGQKKSRGNTQATAHSFDVRVLTQLLLNSDHRSTATVQICSGSVNLRGNVKCRAYIHSNRPKVKDAVQAVKRDILNTVADRCEILFEDLLLNEIPEKKNYELPQRVFVPLPGSTVMLCDYKFGDESAEEIRDHFSEMLDHEIQIEDLEIAEEVNTACMTSSVNSEASLTNTSEEQPEQPKKTIGVKIQQNIGVIAALAVAVLAAGISFHYFSD</sequence>
<proteinExistence type="evidence at protein level"/>
<name>ODR4_MOUSE</name>
<feature type="chain" id="PRO_0000304684" description="Protein odr-4 homolog">
    <location>
        <begin position="1"/>
        <end position="447"/>
    </location>
</feature>
<feature type="transmembrane region" description="Helical" evidence="2">
    <location>
        <begin position="82"/>
        <end position="102"/>
    </location>
</feature>
<feature type="transmembrane region" description="Helical" evidence="2">
    <location>
        <begin position="425"/>
        <end position="445"/>
    </location>
</feature>
<feature type="splice variant" id="VSP_028101" description="In isoform 3." evidence="5">
    <location>
        <begin position="206"/>
        <end position="237"/>
    </location>
</feature>
<feature type="splice variant" id="VSP_028102" description="In isoform 2." evidence="4">
    <location>
        <begin position="238"/>
        <end position="259"/>
    </location>
</feature>
<keyword id="KW-0025">Alternative splicing</keyword>
<keyword id="KW-0472">Membrane</keyword>
<keyword id="KW-1185">Reference proteome</keyword>
<keyword id="KW-0812">Transmembrane</keyword>
<keyword id="KW-1133">Transmembrane helix</keyword>
<dbReference type="EMBL" id="DQ077804">
    <property type="protein sequence ID" value="AAY83272.2"/>
    <property type="molecule type" value="mRNA"/>
</dbReference>
<dbReference type="EMBL" id="BC003331">
    <property type="protein sequence ID" value="AAH03331.2"/>
    <property type="molecule type" value="mRNA"/>
</dbReference>
<dbReference type="EMBL" id="AK152022">
    <property type="protein sequence ID" value="BAE30884.1"/>
    <property type="status" value="ALT_INIT"/>
    <property type="molecule type" value="mRNA"/>
</dbReference>
<dbReference type="CCDS" id="CCDS15355.2">
    <molecule id="Q4PJX1-1"/>
</dbReference>
<dbReference type="CCDS" id="CCDS35733.1">
    <molecule id="Q4PJX1-3"/>
</dbReference>
<dbReference type="RefSeq" id="NP_001070705.1">
    <molecule id="Q4PJX1-3"/>
    <property type="nucleotide sequence ID" value="NM_001077237.1"/>
</dbReference>
<dbReference type="RefSeq" id="NP_663486.2">
    <molecule id="Q4PJX1-1"/>
    <property type="nucleotide sequence ID" value="NM_145511.2"/>
</dbReference>
<dbReference type="BioGRID" id="230519">
    <property type="interactions" value="2"/>
</dbReference>
<dbReference type="FunCoup" id="Q4PJX1">
    <property type="interactions" value="292"/>
</dbReference>
<dbReference type="STRING" id="10090.ENSMUSP00000107544"/>
<dbReference type="iPTMnet" id="Q4PJX1"/>
<dbReference type="PhosphoSitePlus" id="Q4PJX1"/>
<dbReference type="SwissPalm" id="Q4PJX1"/>
<dbReference type="jPOST" id="Q4PJX1"/>
<dbReference type="PaxDb" id="10090-ENSMUSP00000107544"/>
<dbReference type="PeptideAtlas" id="Q4PJX1"/>
<dbReference type="ProteomicsDB" id="289965">
    <molecule id="Q4PJX1-1"/>
</dbReference>
<dbReference type="ProteomicsDB" id="289966">
    <molecule id="Q4PJX1-2"/>
</dbReference>
<dbReference type="ProteomicsDB" id="289967">
    <molecule id="Q4PJX1-3"/>
</dbReference>
<dbReference type="Pumba" id="Q4PJX1"/>
<dbReference type="Antibodypedia" id="3028">
    <property type="antibodies" value="54 antibodies from 14 providers"/>
</dbReference>
<dbReference type="DNASU" id="226499"/>
<dbReference type="Ensembl" id="ENSMUST00000006167.13">
    <molecule id="Q4PJX1-2"/>
    <property type="protein sequence ID" value="ENSMUSP00000006167.7"/>
    <property type="gene ID" value="ENSMUSG00000006010.15"/>
</dbReference>
<dbReference type="Ensembl" id="ENSMUST00000097546.9">
    <molecule id="Q4PJX1-2"/>
    <property type="protein sequence ID" value="ENSMUSP00000095152.3"/>
    <property type="gene ID" value="ENSMUSG00000006010.15"/>
</dbReference>
<dbReference type="Ensembl" id="ENSMUST00000097547.10">
    <molecule id="Q4PJX1-3"/>
    <property type="protein sequence ID" value="ENSMUSP00000095153.4"/>
    <property type="gene ID" value="ENSMUSG00000006010.15"/>
</dbReference>
<dbReference type="Ensembl" id="ENSMUST00000111913.9">
    <molecule id="Q4PJX1-1"/>
    <property type="protein sequence ID" value="ENSMUSP00000107544.3"/>
    <property type="gene ID" value="ENSMUSG00000006010.15"/>
</dbReference>
<dbReference type="GeneID" id="226499"/>
<dbReference type="KEGG" id="mmu:226499"/>
<dbReference type="UCSC" id="uc007cxy.1">
    <molecule id="Q4PJX1-2"/>
    <property type="organism name" value="mouse"/>
</dbReference>
<dbReference type="UCSC" id="uc007cxz.1">
    <molecule id="Q4PJX1-1"/>
    <property type="organism name" value="mouse"/>
</dbReference>
<dbReference type="UCSC" id="uc007cya.1">
    <molecule id="Q4PJX1-3"/>
    <property type="organism name" value="mouse"/>
</dbReference>
<dbReference type="AGR" id="MGI:2385108"/>
<dbReference type="CTD" id="54953"/>
<dbReference type="MGI" id="MGI:2385108">
    <property type="gene designation" value="Odr4"/>
</dbReference>
<dbReference type="VEuPathDB" id="HostDB:ENSMUSG00000006010"/>
<dbReference type="eggNOG" id="KOG4703">
    <property type="taxonomic scope" value="Eukaryota"/>
</dbReference>
<dbReference type="GeneTree" id="ENSGT00390000012568"/>
<dbReference type="InParanoid" id="Q4PJX1"/>
<dbReference type="OMA" id="FNEPPRR"/>
<dbReference type="OrthoDB" id="21458at2759"/>
<dbReference type="PhylomeDB" id="Q4PJX1"/>
<dbReference type="TreeFam" id="TF323772"/>
<dbReference type="BioGRID-ORCS" id="226499">
    <property type="hits" value="20 hits in 78 CRISPR screens"/>
</dbReference>
<dbReference type="ChiTaRS" id="Odr4">
    <property type="organism name" value="mouse"/>
</dbReference>
<dbReference type="PRO" id="PR:Q4PJX1"/>
<dbReference type="Proteomes" id="UP000000589">
    <property type="component" value="Chromosome 1"/>
</dbReference>
<dbReference type="RNAct" id="Q4PJX1">
    <property type="molecule type" value="protein"/>
</dbReference>
<dbReference type="Bgee" id="ENSMUSG00000006010">
    <property type="expression patterns" value="Expressed in supraoptic nucleus and 289 other cell types or tissues"/>
</dbReference>
<dbReference type="ExpressionAtlas" id="Q4PJX1">
    <property type="expression patterns" value="baseline and differential"/>
</dbReference>
<dbReference type="GO" id="GO:0016020">
    <property type="term" value="C:membrane"/>
    <property type="evidence" value="ECO:0007669"/>
    <property type="project" value="UniProtKB-SubCell"/>
</dbReference>
<dbReference type="InterPro" id="IPR029454">
    <property type="entry name" value="ODR-4-like"/>
</dbReference>
<dbReference type="PANTHER" id="PTHR33966">
    <property type="entry name" value="PROTEIN ODR-4 HOMOLOG"/>
    <property type="match status" value="1"/>
</dbReference>
<dbReference type="PANTHER" id="PTHR33966:SF1">
    <property type="entry name" value="PROTEIN ODR-4 HOMOLOG"/>
    <property type="match status" value="1"/>
</dbReference>
<dbReference type="Pfam" id="PF14778">
    <property type="entry name" value="ODR4-like"/>
    <property type="match status" value="1"/>
</dbReference>
<comment type="function">
    <text evidence="1">May play a role in the trafficking of a subset of G-protein coupled receptors.</text>
</comment>
<comment type="subcellular location">
    <subcellularLocation>
        <location evidence="2">Membrane</location>
        <topology evidence="2">Multi-pass membrane protein</topology>
    </subcellularLocation>
</comment>
<comment type="alternative products">
    <event type="alternative splicing"/>
    <isoform>
        <id>Q4PJX1-1</id>
        <name>1</name>
        <sequence type="displayed"/>
    </isoform>
    <isoform>
        <id>Q4PJX1-2</id>
        <name>2</name>
        <sequence type="described" ref="VSP_028102"/>
    </isoform>
    <isoform>
        <id>Q4PJX1-3</id>
        <name>3</name>
        <sequence type="described" ref="VSP_028101"/>
    </isoform>
</comment>
<comment type="tissue specificity">
    <text evidence="3">Ubiquitously expressed.</text>
</comment>
<comment type="similarity">
    <text evidence="6">Belongs to the ODR-4 family.</text>
</comment>
<comment type="sequence caution" evidence="6">
    <conflict type="erroneous initiation">
        <sequence resource="EMBL-CDS" id="BAE30884"/>
    </conflict>
</comment>
<gene>
    <name type="primary">Odr4</name>
</gene>